<evidence type="ECO:0000255" key="1"/>
<evidence type="ECO:0000305" key="2"/>
<keyword id="KW-0175">Coiled coil</keyword>
<keyword id="KW-0472">Membrane</keyword>
<keyword id="KW-1185">Reference proteome</keyword>
<keyword id="KW-0812">Transmembrane</keyword>
<keyword id="KW-1133">Transmembrane helix</keyword>
<sequence length="509" mass="56502">MGDFNLALVIVAIVVCVIVFISSIYLLVNYQHPDDANQAYFPKFVVVFGLSIAMISILMLPADVANRHACRHSIYNGACNLTLPMKDLWLAVYIVDAVLVFFIIPFAMFFYEGDQDKALGKRIKSALIWVVTTAVVCALVLGILYGVIGKVDFSVRHLSSATTTFPTSWQFSNNQPCIGNTARQCSAYTANAASEKTWSMRTTFPEYVVALATIVGSVLFTIFGGVGIACLPLGLITAFIRRPKAVITRSQYIKEATELGKKARDLKKAADALHQEERSGAKGRKWRKNVKAVEKELLQLEEDVNLLEEMYPQGEQAETAWAFTVLGYLAKFVLGILGLIVSVAWIAHIIIYLLVDPPLSPFLNEVFIKLDDVWGLLGTAAFAFFCFYLLLAVIAGAMMLGLKLVFITIHPMKWGATLMNSFLFNVGLILLCSISVIQFCATAFGYYAQATAAQEIFGHTLQSLRGIKYLYKYNVFQIGFVVLAGLTFLYYIAFGWRRKKPSGRFQLST</sequence>
<organism>
    <name type="scientific">Arabidopsis thaliana</name>
    <name type="common">Mouse-ear cress</name>
    <dbReference type="NCBI Taxonomy" id="3702"/>
    <lineage>
        <taxon>Eukaryota</taxon>
        <taxon>Viridiplantae</taxon>
        <taxon>Streptophyta</taxon>
        <taxon>Embryophyta</taxon>
        <taxon>Tracheophyta</taxon>
        <taxon>Spermatophyta</taxon>
        <taxon>Magnoliopsida</taxon>
        <taxon>eudicotyledons</taxon>
        <taxon>Gunneridae</taxon>
        <taxon>Pentapetalae</taxon>
        <taxon>rosids</taxon>
        <taxon>malvids</taxon>
        <taxon>Brassicales</taxon>
        <taxon>Brassicaceae</taxon>
        <taxon>Camelineae</taxon>
        <taxon>Arabidopsis</taxon>
    </lineage>
</organism>
<comment type="subcellular location">
    <subcellularLocation>
        <location evidence="2">Membrane</location>
        <topology evidence="2">Multi-pass membrane protein</topology>
    </subcellularLocation>
</comment>
<comment type="similarity">
    <text evidence="2">Belongs to the LIMR family.</text>
</comment>
<proteinExistence type="evidence at transcript level"/>
<name>LMBD2_ARATH</name>
<accession>Q9M028</accession>
<reference key="1">
    <citation type="journal article" date="2000" name="Nature">
        <title>Sequence and analysis of chromosome 5 of the plant Arabidopsis thaliana.</title>
        <authorList>
            <person name="Tabata S."/>
            <person name="Kaneko T."/>
            <person name="Nakamura Y."/>
            <person name="Kotani H."/>
            <person name="Kato T."/>
            <person name="Asamizu E."/>
            <person name="Miyajima N."/>
            <person name="Sasamoto S."/>
            <person name="Kimura T."/>
            <person name="Hosouchi T."/>
            <person name="Kawashima K."/>
            <person name="Kohara M."/>
            <person name="Matsumoto M."/>
            <person name="Matsuno A."/>
            <person name="Muraki A."/>
            <person name="Nakayama S."/>
            <person name="Nakazaki N."/>
            <person name="Naruo K."/>
            <person name="Okumura S."/>
            <person name="Shinpo S."/>
            <person name="Takeuchi C."/>
            <person name="Wada T."/>
            <person name="Watanabe A."/>
            <person name="Yamada M."/>
            <person name="Yasuda M."/>
            <person name="Sato S."/>
            <person name="de la Bastide M."/>
            <person name="Huang E."/>
            <person name="Spiegel L."/>
            <person name="Gnoj L."/>
            <person name="O'Shaughnessy A."/>
            <person name="Preston R."/>
            <person name="Habermann K."/>
            <person name="Murray J."/>
            <person name="Johnson D."/>
            <person name="Rohlfing T."/>
            <person name="Nelson J."/>
            <person name="Stoneking T."/>
            <person name="Pepin K."/>
            <person name="Spieth J."/>
            <person name="Sekhon M."/>
            <person name="Armstrong J."/>
            <person name="Becker M."/>
            <person name="Belter E."/>
            <person name="Cordum H."/>
            <person name="Cordes M."/>
            <person name="Courtney L."/>
            <person name="Courtney W."/>
            <person name="Dante M."/>
            <person name="Du H."/>
            <person name="Edwards J."/>
            <person name="Fryman J."/>
            <person name="Haakensen B."/>
            <person name="Lamar E."/>
            <person name="Latreille P."/>
            <person name="Leonard S."/>
            <person name="Meyer R."/>
            <person name="Mulvaney E."/>
            <person name="Ozersky P."/>
            <person name="Riley A."/>
            <person name="Strowmatt C."/>
            <person name="Wagner-McPherson C."/>
            <person name="Wollam A."/>
            <person name="Yoakum M."/>
            <person name="Bell M."/>
            <person name="Dedhia N."/>
            <person name="Parnell L."/>
            <person name="Shah R."/>
            <person name="Rodriguez M."/>
            <person name="Hoon See L."/>
            <person name="Vil D."/>
            <person name="Baker J."/>
            <person name="Kirchoff K."/>
            <person name="Toth K."/>
            <person name="King L."/>
            <person name="Bahret A."/>
            <person name="Miller B."/>
            <person name="Marra M.A."/>
            <person name="Martienssen R."/>
            <person name="McCombie W.R."/>
            <person name="Wilson R.K."/>
            <person name="Murphy G."/>
            <person name="Bancroft I."/>
            <person name="Volckaert G."/>
            <person name="Wambutt R."/>
            <person name="Duesterhoeft A."/>
            <person name="Stiekema W."/>
            <person name="Pohl T."/>
            <person name="Entian K.-D."/>
            <person name="Terryn N."/>
            <person name="Hartley N."/>
            <person name="Bent E."/>
            <person name="Johnson S."/>
            <person name="Langham S.-A."/>
            <person name="McCullagh B."/>
            <person name="Robben J."/>
            <person name="Grymonprez B."/>
            <person name="Zimmermann W."/>
            <person name="Ramsperger U."/>
            <person name="Wedler H."/>
            <person name="Balke K."/>
            <person name="Wedler E."/>
            <person name="Peters S."/>
            <person name="van Staveren M."/>
            <person name="Dirkse W."/>
            <person name="Mooijman P."/>
            <person name="Klein Lankhorst R."/>
            <person name="Weitzenegger T."/>
            <person name="Bothe G."/>
            <person name="Rose M."/>
            <person name="Hauf J."/>
            <person name="Berneiser S."/>
            <person name="Hempel S."/>
            <person name="Feldpausch M."/>
            <person name="Lamberth S."/>
            <person name="Villarroel R."/>
            <person name="Gielen J."/>
            <person name="Ardiles W."/>
            <person name="Bents O."/>
            <person name="Lemcke K."/>
            <person name="Kolesov G."/>
            <person name="Mayer K.F.X."/>
            <person name="Rudd S."/>
            <person name="Schoof H."/>
            <person name="Schueller C."/>
            <person name="Zaccaria P."/>
            <person name="Mewes H.-W."/>
            <person name="Bevan M."/>
            <person name="Fransz P.F."/>
        </authorList>
    </citation>
    <scope>NUCLEOTIDE SEQUENCE [LARGE SCALE GENOMIC DNA]</scope>
    <source>
        <strain>cv. Columbia</strain>
    </source>
</reference>
<reference key="2">
    <citation type="journal article" date="2017" name="Plant J.">
        <title>Araport11: a complete reannotation of the Arabidopsis thaliana reference genome.</title>
        <authorList>
            <person name="Cheng C.Y."/>
            <person name="Krishnakumar V."/>
            <person name="Chan A.P."/>
            <person name="Thibaud-Nissen F."/>
            <person name="Schobel S."/>
            <person name="Town C.D."/>
        </authorList>
    </citation>
    <scope>GENOME REANNOTATION</scope>
    <source>
        <strain>cv. Columbia</strain>
    </source>
</reference>
<reference key="3">
    <citation type="journal article" date="2003" name="Science">
        <title>Empirical analysis of transcriptional activity in the Arabidopsis genome.</title>
        <authorList>
            <person name="Yamada K."/>
            <person name="Lim J."/>
            <person name="Dale J.M."/>
            <person name="Chen H."/>
            <person name="Shinn P."/>
            <person name="Palm C.J."/>
            <person name="Southwick A.M."/>
            <person name="Wu H.C."/>
            <person name="Kim C.J."/>
            <person name="Nguyen M."/>
            <person name="Pham P.K."/>
            <person name="Cheuk R.F."/>
            <person name="Karlin-Newmann G."/>
            <person name="Liu S.X."/>
            <person name="Lam B."/>
            <person name="Sakano H."/>
            <person name="Wu T."/>
            <person name="Yu G."/>
            <person name="Miranda M."/>
            <person name="Quach H.L."/>
            <person name="Tripp M."/>
            <person name="Chang C.H."/>
            <person name="Lee J.M."/>
            <person name="Toriumi M.J."/>
            <person name="Chan M.M."/>
            <person name="Tang C.C."/>
            <person name="Onodera C.S."/>
            <person name="Deng J.M."/>
            <person name="Akiyama K."/>
            <person name="Ansari Y."/>
            <person name="Arakawa T."/>
            <person name="Banh J."/>
            <person name="Banno F."/>
            <person name="Bowser L."/>
            <person name="Brooks S.Y."/>
            <person name="Carninci P."/>
            <person name="Chao Q."/>
            <person name="Choy N."/>
            <person name="Enju A."/>
            <person name="Goldsmith A.D."/>
            <person name="Gurjal M."/>
            <person name="Hansen N.F."/>
            <person name="Hayashizaki Y."/>
            <person name="Johnson-Hopson C."/>
            <person name="Hsuan V.W."/>
            <person name="Iida K."/>
            <person name="Karnes M."/>
            <person name="Khan S."/>
            <person name="Koesema E."/>
            <person name="Ishida J."/>
            <person name="Jiang P.X."/>
            <person name="Jones T."/>
            <person name="Kawai J."/>
            <person name="Kamiya A."/>
            <person name="Meyers C."/>
            <person name="Nakajima M."/>
            <person name="Narusaka M."/>
            <person name="Seki M."/>
            <person name="Sakurai T."/>
            <person name="Satou M."/>
            <person name="Tamse R."/>
            <person name="Vaysberg M."/>
            <person name="Wallender E.K."/>
            <person name="Wong C."/>
            <person name="Yamamura Y."/>
            <person name="Yuan S."/>
            <person name="Shinozaki K."/>
            <person name="Davis R.W."/>
            <person name="Theologis A."/>
            <person name="Ecker J.R."/>
        </authorList>
    </citation>
    <scope>NUCLEOTIDE SEQUENCE [LARGE SCALE MRNA]</scope>
    <source>
        <strain>cv. Columbia</strain>
    </source>
</reference>
<gene>
    <name type="ordered locus">At5g01460</name>
    <name type="ORF">T10O8.170</name>
</gene>
<protein>
    <recommendedName>
        <fullName>LIMR family protein At5g01460</fullName>
    </recommendedName>
</protein>
<dbReference type="EMBL" id="AL161746">
    <property type="protein sequence ID" value="CAB81929.1"/>
    <property type="molecule type" value="Genomic_DNA"/>
</dbReference>
<dbReference type="EMBL" id="CP002688">
    <property type="protein sequence ID" value="AED90347.1"/>
    <property type="molecule type" value="Genomic_DNA"/>
</dbReference>
<dbReference type="EMBL" id="AY072197">
    <property type="protein sequence ID" value="AAL60018.1"/>
    <property type="molecule type" value="mRNA"/>
</dbReference>
<dbReference type="EMBL" id="AY096440">
    <property type="protein sequence ID" value="AAM20080.1"/>
    <property type="molecule type" value="mRNA"/>
</dbReference>
<dbReference type="PIR" id="T48168">
    <property type="entry name" value="T48168"/>
</dbReference>
<dbReference type="RefSeq" id="NP_195766.1">
    <property type="nucleotide sequence ID" value="NM_120224.4"/>
</dbReference>
<dbReference type="SMR" id="Q9M028"/>
<dbReference type="FunCoup" id="Q9M028">
    <property type="interactions" value="2589"/>
</dbReference>
<dbReference type="STRING" id="3702.Q9M028"/>
<dbReference type="SwissPalm" id="Q9M028"/>
<dbReference type="PaxDb" id="3702-AT5G01460.1"/>
<dbReference type="ProteomicsDB" id="238441"/>
<dbReference type="EnsemblPlants" id="AT5G01460.1">
    <property type="protein sequence ID" value="AT5G01460.1"/>
    <property type="gene ID" value="AT5G01460"/>
</dbReference>
<dbReference type="GeneID" id="831815"/>
<dbReference type="Gramene" id="AT5G01460.1">
    <property type="protein sequence ID" value="AT5G01460.1"/>
    <property type="gene ID" value="AT5G01460"/>
</dbReference>
<dbReference type="KEGG" id="ath:AT5G01460"/>
<dbReference type="Araport" id="AT5G01460"/>
<dbReference type="TAIR" id="AT5G01460"/>
<dbReference type="eggNOG" id="ENOG502QPKQ">
    <property type="taxonomic scope" value="Eukaryota"/>
</dbReference>
<dbReference type="HOGENOM" id="CLU_026480_2_0_1"/>
<dbReference type="InParanoid" id="Q9M028"/>
<dbReference type="OMA" id="MWEIVLW"/>
<dbReference type="OrthoDB" id="73273at2759"/>
<dbReference type="PhylomeDB" id="Q9M028"/>
<dbReference type="PRO" id="PR:Q9M028"/>
<dbReference type="Proteomes" id="UP000006548">
    <property type="component" value="Chromosome 5"/>
</dbReference>
<dbReference type="ExpressionAtlas" id="Q9M028">
    <property type="expression patterns" value="baseline and differential"/>
</dbReference>
<dbReference type="GO" id="GO:0005886">
    <property type="term" value="C:plasma membrane"/>
    <property type="evidence" value="ECO:0007005"/>
    <property type="project" value="TAIR"/>
</dbReference>
<dbReference type="InterPro" id="IPR006876">
    <property type="entry name" value="LMBR1-like_membr_prot"/>
</dbReference>
<dbReference type="PANTHER" id="PTHR31652">
    <property type="entry name" value="LIMR FAMILY PROTEIN DDB_G0283707-RELATED"/>
    <property type="match status" value="1"/>
</dbReference>
<dbReference type="PANTHER" id="PTHR31652:SF0">
    <property type="entry name" value="LIMR FAMILY PROTEIN DDB_G0283707-RELATED"/>
    <property type="match status" value="1"/>
</dbReference>
<dbReference type="Pfam" id="PF04791">
    <property type="entry name" value="LMBR1"/>
    <property type="match status" value="2"/>
</dbReference>
<feature type="chain" id="PRO_0000366937" description="LIMR family protein At5g01460">
    <location>
        <begin position="1"/>
        <end position="509"/>
    </location>
</feature>
<feature type="transmembrane region" description="Helical" evidence="1">
    <location>
        <begin position="8"/>
        <end position="28"/>
    </location>
</feature>
<feature type="transmembrane region" description="Helical" evidence="1">
    <location>
        <begin position="44"/>
        <end position="64"/>
    </location>
</feature>
<feature type="transmembrane region" description="Helical" evidence="1">
    <location>
        <begin position="90"/>
        <end position="110"/>
    </location>
</feature>
<feature type="transmembrane region" description="Helical" evidence="1">
    <location>
        <begin position="128"/>
        <end position="148"/>
    </location>
</feature>
<feature type="transmembrane region" description="Helical" evidence="1">
    <location>
        <begin position="208"/>
        <end position="228"/>
    </location>
</feature>
<feature type="transmembrane region" description="Helical" evidence="1">
    <location>
        <begin position="332"/>
        <end position="352"/>
    </location>
</feature>
<feature type="transmembrane region" description="Helical" evidence="1">
    <location>
        <begin position="382"/>
        <end position="402"/>
    </location>
</feature>
<feature type="transmembrane region" description="Helical" evidence="1">
    <location>
        <begin position="422"/>
        <end position="442"/>
    </location>
</feature>
<feature type="transmembrane region" description="Helical" evidence="1">
    <location>
        <begin position="475"/>
        <end position="495"/>
    </location>
</feature>
<feature type="coiled-coil region" evidence="1">
    <location>
        <begin position="251"/>
        <end position="316"/>
    </location>
</feature>